<sequence>MSEQIVTPESSTPVVLNNETKINLLDLNRQQMREFFKNLGEKPFRADQVMKWMYHYCCDNFDEMTDINKVLRGKLKEVAEIRAPEVVEEQRSSDGTIKWAIAVGDQRVETVYIPEDDRATLCVSSQVGCALECKFCSTAQQGFNRNLRVSEIIGQVWRAAKIVGAAKVTGQRPITNVVMMGMGEPLLNLTNVVPAMEIMLDDFGFGLSKRRVTLSTSGVVPALDKLGDMIDVALAISLHAPNDTIRDEIVPINKKYNIETFLGAVRRYLEKSNANQGRVTIEYVMLDHVNDGTEHAHQLAELLKETPCKINLIPWNPFPGAPYGRSSNSRIDRFSKVLMSYGFTTIVRKTRGDDIDAACGQLAGDVIDRTKRTLRKRMQGEVIDIKAI</sequence>
<proteinExistence type="inferred from homology"/>
<gene>
    <name evidence="1" type="primary">rlmN</name>
    <name type="ordered locus">SeHA_C2783</name>
</gene>
<reference key="1">
    <citation type="journal article" date="2011" name="J. Bacteriol.">
        <title>Comparative genomics of 28 Salmonella enterica isolates: evidence for CRISPR-mediated adaptive sublineage evolution.</title>
        <authorList>
            <person name="Fricke W.F."/>
            <person name="Mammel M.K."/>
            <person name="McDermott P.F."/>
            <person name="Tartera C."/>
            <person name="White D.G."/>
            <person name="Leclerc J.E."/>
            <person name="Ravel J."/>
            <person name="Cebula T.A."/>
        </authorList>
    </citation>
    <scope>NUCLEOTIDE SEQUENCE [LARGE SCALE GENOMIC DNA]</scope>
    <source>
        <strain>SL476</strain>
    </source>
</reference>
<dbReference type="EC" id="2.1.1.192" evidence="1"/>
<dbReference type="EMBL" id="CP001120">
    <property type="protein sequence ID" value="ACF66620.1"/>
    <property type="molecule type" value="Genomic_DNA"/>
</dbReference>
<dbReference type="RefSeq" id="WP_000003206.1">
    <property type="nucleotide sequence ID" value="NC_011083.1"/>
</dbReference>
<dbReference type="SMR" id="B4TD95"/>
<dbReference type="KEGG" id="seh:SeHA_C2783"/>
<dbReference type="HOGENOM" id="CLU_029101_0_0_6"/>
<dbReference type="Proteomes" id="UP000001866">
    <property type="component" value="Chromosome"/>
</dbReference>
<dbReference type="GO" id="GO:0005737">
    <property type="term" value="C:cytoplasm"/>
    <property type="evidence" value="ECO:0007669"/>
    <property type="project" value="UniProtKB-SubCell"/>
</dbReference>
<dbReference type="GO" id="GO:0051539">
    <property type="term" value="F:4 iron, 4 sulfur cluster binding"/>
    <property type="evidence" value="ECO:0007669"/>
    <property type="project" value="UniProtKB-UniRule"/>
</dbReference>
<dbReference type="GO" id="GO:0046872">
    <property type="term" value="F:metal ion binding"/>
    <property type="evidence" value="ECO:0007669"/>
    <property type="project" value="UniProtKB-KW"/>
</dbReference>
<dbReference type="GO" id="GO:0070040">
    <property type="term" value="F:rRNA (adenine(2503)-C2-)-methyltransferase activity"/>
    <property type="evidence" value="ECO:0007669"/>
    <property type="project" value="UniProtKB-UniRule"/>
</dbReference>
<dbReference type="GO" id="GO:0019843">
    <property type="term" value="F:rRNA binding"/>
    <property type="evidence" value="ECO:0007669"/>
    <property type="project" value="UniProtKB-UniRule"/>
</dbReference>
<dbReference type="GO" id="GO:0002935">
    <property type="term" value="F:tRNA (adenine(37)-C2)-methyltransferase activity"/>
    <property type="evidence" value="ECO:0007669"/>
    <property type="project" value="UniProtKB-UniRule"/>
</dbReference>
<dbReference type="GO" id="GO:0000049">
    <property type="term" value="F:tRNA binding"/>
    <property type="evidence" value="ECO:0007669"/>
    <property type="project" value="UniProtKB-UniRule"/>
</dbReference>
<dbReference type="GO" id="GO:0070475">
    <property type="term" value="P:rRNA base methylation"/>
    <property type="evidence" value="ECO:0007669"/>
    <property type="project" value="UniProtKB-UniRule"/>
</dbReference>
<dbReference type="GO" id="GO:0030488">
    <property type="term" value="P:tRNA methylation"/>
    <property type="evidence" value="ECO:0007669"/>
    <property type="project" value="UniProtKB-UniRule"/>
</dbReference>
<dbReference type="CDD" id="cd01335">
    <property type="entry name" value="Radical_SAM"/>
    <property type="match status" value="1"/>
</dbReference>
<dbReference type="FunFam" id="1.10.150.530:FF:000001">
    <property type="entry name" value="Dual-specificity RNA methyltransferase RlmN"/>
    <property type="match status" value="1"/>
</dbReference>
<dbReference type="FunFam" id="3.20.20.70:FF:000008">
    <property type="entry name" value="Dual-specificity RNA methyltransferase RlmN"/>
    <property type="match status" value="1"/>
</dbReference>
<dbReference type="Gene3D" id="1.10.150.530">
    <property type="match status" value="1"/>
</dbReference>
<dbReference type="Gene3D" id="3.20.20.70">
    <property type="entry name" value="Aldolase class I"/>
    <property type="match status" value="1"/>
</dbReference>
<dbReference type="HAMAP" id="MF_01849">
    <property type="entry name" value="RNA_methyltr_RlmN"/>
    <property type="match status" value="1"/>
</dbReference>
<dbReference type="InterPro" id="IPR013785">
    <property type="entry name" value="Aldolase_TIM"/>
</dbReference>
<dbReference type="InterPro" id="IPR040072">
    <property type="entry name" value="Methyltransferase_A"/>
</dbReference>
<dbReference type="InterPro" id="IPR048641">
    <property type="entry name" value="RlmN_N"/>
</dbReference>
<dbReference type="InterPro" id="IPR027492">
    <property type="entry name" value="RNA_MTrfase_RlmN"/>
</dbReference>
<dbReference type="InterPro" id="IPR004383">
    <property type="entry name" value="rRNA_lsu_MTrfase_RlmN/Cfr"/>
</dbReference>
<dbReference type="InterPro" id="IPR007197">
    <property type="entry name" value="rSAM"/>
</dbReference>
<dbReference type="NCBIfam" id="NF008396">
    <property type="entry name" value="PRK11194.1"/>
    <property type="match status" value="1"/>
</dbReference>
<dbReference type="NCBIfam" id="TIGR00048">
    <property type="entry name" value="rRNA_mod_RlmN"/>
    <property type="match status" value="1"/>
</dbReference>
<dbReference type="PANTHER" id="PTHR30544">
    <property type="entry name" value="23S RRNA METHYLTRANSFERASE"/>
    <property type="match status" value="1"/>
</dbReference>
<dbReference type="PANTHER" id="PTHR30544:SF5">
    <property type="entry name" value="RADICAL SAM CORE DOMAIN-CONTAINING PROTEIN"/>
    <property type="match status" value="1"/>
</dbReference>
<dbReference type="Pfam" id="PF04055">
    <property type="entry name" value="Radical_SAM"/>
    <property type="match status" value="1"/>
</dbReference>
<dbReference type="Pfam" id="PF21016">
    <property type="entry name" value="RlmN_N"/>
    <property type="match status" value="1"/>
</dbReference>
<dbReference type="PIRSF" id="PIRSF006004">
    <property type="entry name" value="CHP00048"/>
    <property type="match status" value="1"/>
</dbReference>
<dbReference type="SFLD" id="SFLDF00275">
    <property type="entry name" value="adenosine_C2_methyltransferase"/>
    <property type="match status" value="1"/>
</dbReference>
<dbReference type="SFLD" id="SFLDS00029">
    <property type="entry name" value="Radical_SAM"/>
    <property type="match status" value="1"/>
</dbReference>
<dbReference type="SUPFAM" id="SSF102114">
    <property type="entry name" value="Radical SAM enzymes"/>
    <property type="match status" value="1"/>
</dbReference>
<dbReference type="PROSITE" id="PS51918">
    <property type="entry name" value="RADICAL_SAM"/>
    <property type="match status" value="1"/>
</dbReference>
<accession>B4TD95</accession>
<evidence type="ECO:0000255" key="1">
    <source>
        <dbReference type="HAMAP-Rule" id="MF_01849"/>
    </source>
</evidence>
<evidence type="ECO:0000255" key="2">
    <source>
        <dbReference type="PROSITE-ProRule" id="PRU01266"/>
    </source>
</evidence>
<comment type="function">
    <text evidence="1">Specifically methylates position 2 of adenine 2503 in 23S rRNA and position 2 of adenine 37 in tRNAs. m2A2503 modification seems to play a crucial role in the proofreading step occurring at the peptidyl transferase center and thus would serve to optimize ribosomal fidelity.</text>
</comment>
<comment type="catalytic activity">
    <reaction evidence="1">
        <text>adenosine(2503) in 23S rRNA + 2 reduced [2Fe-2S]-[ferredoxin] + 2 S-adenosyl-L-methionine = 2-methyladenosine(2503) in 23S rRNA + 5'-deoxyadenosine + L-methionine + 2 oxidized [2Fe-2S]-[ferredoxin] + S-adenosyl-L-homocysteine</text>
        <dbReference type="Rhea" id="RHEA:42916"/>
        <dbReference type="Rhea" id="RHEA-COMP:10000"/>
        <dbReference type="Rhea" id="RHEA-COMP:10001"/>
        <dbReference type="Rhea" id="RHEA-COMP:10152"/>
        <dbReference type="Rhea" id="RHEA-COMP:10282"/>
        <dbReference type="ChEBI" id="CHEBI:17319"/>
        <dbReference type="ChEBI" id="CHEBI:33737"/>
        <dbReference type="ChEBI" id="CHEBI:33738"/>
        <dbReference type="ChEBI" id="CHEBI:57844"/>
        <dbReference type="ChEBI" id="CHEBI:57856"/>
        <dbReference type="ChEBI" id="CHEBI:59789"/>
        <dbReference type="ChEBI" id="CHEBI:74411"/>
        <dbReference type="ChEBI" id="CHEBI:74497"/>
        <dbReference type="EC" id="2.1.1.192"/>
    </reaction>
</comment>
<comment type="catalytic activity">
    <reaction evidence="1">
        <text>adenosine(37) in tRNA + 2 reduced [2Fe-2S]-[ferredoxin] + 2 S-adenosyl-L-methionine = 2-methyladenosine(37) in tRNA + 5'-deoxyadenosine + L-methionine + 2 oxidized [2Fe-2S]-[ferredoxin] + S-adenosyl-L-homocysteine</text>
        <dbReference type="Rhea" id="RHEA:43332"/>
        <dbReference type="Rhea" id="RHEA-COMP:10000"/>
        <dbReference type="Rhea" id="RHEA-COMP:10001"/>
        <dbReference type="Rhea" id="RHEA-COMP:10162"/>
        <dbReference type="Rhea" id="RHEA-COMP:10485"/>
        <dbReference type="ChEBI" id="CHEBI:17319"/>
        <dbReference type="ChEBI" id="CHEBI:33737"/>
        <dbReference type="ChEBI" id="CHEBI:33738"/>
        <dbReference type="ChEBI" id="CHEBI:57844"/>
        <dbReference type="ChEBI" id="CHEBI:57856"/>
        <dbReference type="ChEBI" id="CHEBI:59789"/>
        <dbReference type="ChEBI" id="CHEBI:74411"/>
        <dbReference type="ChEBI" id="CHEBI:74497"/>
        <dbReference type="EC" id="2.1.1.192"/>
    </reaction>
</comment>
<comment type="cofactor">
    <cofactor evidence="1">
        <name>[4Fe-4S] cluster</name>
        <dbReference type="ChEBI" id="CHEBI:49883"/>
    </cofactor>
    <text evidence="1">Binds 1 [4Fe-4S] cluster. The cluster is coordinated with 3 cysteines and an exchangeable S-adenosyl-L-methionine.</text>
</comment>
<comment type="subcellular location">
    <subcellularLocation>
        <location evidence="1">Cytoplasm</location>
    </subcellularLocation>
</comment>
<comment type="miscellaneous">
    <text evidence="1">Reaction proceeds by a ping-pong mechanism involving intermediate methylation of a conserved cysteine residue.</text>
</comment>
<comment type="similarity">
    <text evidence="1">Belongs to the radical SAM superfamily. RlmN family.</text>
</comment>
<feature type="chain" id="PRO_1000188601" description="Dual-specificity RNA methyltransferase RlmN">
    <location>
        <begin position="1"/>
        <end position="388"/>
    </location>
</feature>
<feature type="domain" description="Radical SAM core" evidence="2">
    <location>
        <begin position="115"/>
        <end position="354"/>
    </location>
</feature>
<feature type="active site" description="Proton acceptor" evidence="1">
    <location>
        <position position="109"/>
    </location>
</feature>
<feature type="active site" description="S-methylcysteine intermediate" evidence="1">
    <location>
        <position position="359"/>
    </location>
</feature>
<feature type="binding site" evidence="1">
    <location>
        <position position="129"/>
    </location>
    <ligand>
        <name>[4Fe-4S] cluster</name>
        <dbReference type="ChEBI" id="CHEBI:49883"/>
        <note>4Fe-4S-S-AdoMet</note>
    </ligand>
</feature>
<feature type="binding site" evidence="1">
    <location>
        <position position="133"/>
    </location>
    <ligand>
        <name>[4Fe-4S] cluster</name>
        <dbReference type="ChEBI" id="CHEBI:49883"/>
        <note>4Fe-4S-S-AdoMet</note>
    </ligand>
</feature>
<feature type="binding site" evidence="1">
    <location>
        <position position="136"/>
    </location>
    <ligand>
        <name>[4Fe-4S] cluster</name>
        <dbReference type="ChEBI" id="CHEBI:49883"/>
        <note>4Fe-4S-S-AdoMet</note>
    </ligand>
</feature>
<feature type="binding site" evidence="1">
    <location>
        <begin position="183"/>
        <end position="184"/>
    </location>
    <ligand>
        <name>S-adenosyl-L-methionine</name>
        <dbReference type="ChEBI" id="CHEBI:59789"/>
    </ligand>
</feature>
<feature type="binding site" evidence="1">
    <location>
        <position position="215"/>
    </location>
    <ligand>
        <name>S-adenosyl-L-methionine</name>
        <dbReference type="ChEBI" id="CHEBI:59789"/>
    </ligand>
</feature>
<feature type="binding site" evidence="1">
    <location>
        <begin position="237"/>
        <end position="239"/>
    </location>
    <ligand>
        <name>S-adenosyl-L-methionine</name>
        <dbReference type="ChEBI" id="CHEBI:59789"/>
    </ligand>
</feature>
<feature type="binding site" evidence="1">
    <location>
        <position position="316"/>
    </location>
    <ligand>
        <name>S-adenosyl-L-methionine</name>
        <dbReference type="ChEBI" id="CHEBI:59789"/>
    </ligand>
</feature>
<feature type="disulfide bond" description="(transient)" evidence="1">
    <location>
        <begin position="122"/>
        <end position="359"/>
    </location>
</feature>
<name>RLMN_SALHS</name>
<keyword id="KW-0004">4Fe-4S</keyword>
<keyword id="KW-0963">Cytoplasm</keyword>
<keyword id="KW-1015">Disulfide bond</keyword>
<keyword id="KW-0408">Iron</keyword>
<keyword id="KW-0411">Iron-sulfur</keyword>
<keyword id="KW-0479">Metal-binding</keyword>
<keyword id="KW-0489">Methyltransferase</keyword>
<keyword id="KW-0698">rRNA processing</keyword>
<keyword id="KW-0949">S-adenosyl-L-methionine</keyword>
<keyword id="KW-0808">Transferase</keyword>
<keyword id="KW-0819">tRNA processing</keyword>
<protein>
    <recommendedName>
        <fullName evidence="1">Dual-specificity RNA methyltransferase RlmN</fullName>
        <ecNumber evidence="1">2.1.1.192</ecNumber>
    </recommendedName>
    <alternativeName>
        <fullName evidence="1">23S rRNA (adenine(2503)-C(2))-methyltransferase</fullName>
    </alternativeName>
    <alternativeName>
        <fullName evidence="1">23S rRNA m2A2503 methyltransferase</fullName>
    </alternativeName>
    <alternativeName>
        <fullName evidence="1">Ribosomal RNA large subunit methyltransferase N</fullName>
    </alternativeName>
    <alternativeName>
        <fullName evidence="1">tRNA (adenine(37)-C(2))-methyltransferase</fullName>
    </alternativeName>
    <alternativeName>
        <fullName evidence="1">tRNA m2A37 methyltransferase</fullName>
    </alternativeName>
</protein>
<organism>
    <name type="scientific">Salmonella heidelberg (strain SL476)</name>
    <dbReference type="NCBI Taxonomy" id="454169"/>
    <lineage>
        <taxon>Bacteria</taxon>
        <taxon>Pseudomonadati</taxon>
        <taxon>Pseudomonadota</taxon>
        <taxon>Gammaproteobacteria</taxon>
        <taxon>Enterobacterales</taxon>
        <taxon>Enterobacteriaceae</taxon>
        <taxon>Salmonella</taxon>
    </lineage>
</organism>